<comment type="function">
    <text evidence="2">Required for the maturation and activation of urease via the functional incorporation of the urease nickel metallocenter.</text>
</comment>
<comment type="subunit">
    <text evidence="1">URED, UREF and UREG may form a complex that acts as a GTP-hydrolysis-dependent molecular chaperone, activating the urease apoprotein.</text>
</comment>
<comment type="similarity">
    <text evidence="3">Belongs to the UreF family.</text>
</comment>
<proteinExistence type="evidence at transcript level"/>
<feature type="chain" id="PRO_0000424253" description="Urease accessory protein F">
    <location>
        <begin position="1"/>
        <end position="261"/>
    </location>
</feature>
<protein>
    <recommendedName>
        <fullName>Urease accessory protein F</fullName>
        <shortName>AtUREF</shortName>
    </recommendedName>
</protein>
<accession>E0ZS46</accession>
<evidence type="ECO:0000250" key="1"/>
<evidence type="ECO:0000269" key="2">
    <source>
    </source>
</evidence>
<evidence type="ECO:0000305" key="3"/>
<organism>
    <name type="scientific">Oryza sativa subsp. indica</name>
    <name type="common">Rice</name>
    <dbReference type="NCBI Taxonomy" id="39946"/>
    <lineage>
        <taxon>Eukaryota</taxon>
        <taxon>Viridiplantae</taxon>
        <taxon>Streptophyta</taxon>
        <taxon>Embryophyta</taxon>
        <taxon>Tracheophyta</taxon>
        <taxon>Spermatophyta</taxon>
        <taxon>Magnoliopsida</taxon>
        <taxon>Liliopsida</taxon>
        <taxon>Poales</taxon>
        <taxon>Poaceae</taxon>
        <taxon>BOP clade</taxon>
        <taxon>Oryzoideae</taxon>
        <taxon>Oryzeae</taxon>
        <taxon>Oryzinae</taxon>
        <taxon>Oryza</taxon>
        <taxon>Oryza sativa</taxon>
    </lineage>
</organism>
<name>UREF_ORYSI</name>
<dbReference type="EMBL" id="HM369058">
    <property type="protein sequence ID" value="ADK73997.1"/>
    <property type="molecule type" value="mRNA"/>
</dbReference>
<dbReference type="SMR" id="E0ZS46"/>
<dbReference type="EnsemblPlants" id="OsIR64_02g0005060.01">
    <property type="protein sequence ID" value="OsIR64_02g0005060.01"/>
    <property type="gene ID" value="OsIR64_02g0005060"/>
</dbReference>
<dbReference type="EnsemblPlants" id="OsIR64_02g0005060.02">
    <property type="protein sequence ID" value="OsIR64_02g0005060.02"/>
    <property type="gene ID" value="OsIR64_02g0005060"/>
</dbReference>
<dbReference type="EnsemblPlants" id="OsKYG_02g0005050.01">
    <property type="protein sequence ID" value="OsKYG_02g0005050.01"/>
    <property type="gene ID" value="OsKYG_02g0005050"/>
</dbReference>
<dbReference type="EnsemblPlants" id="OsLima_02g0005460.01">
    <property type="protein sequence ID" value="OsLima_02g0005460.01"/>
    <property type="gene ID" value="OsLima_02g0005460"/>
</dbReference>
<dbReference type="EnsemblPlants" id="OsLiXu_02g0005290.01">
    <property type="protein sequence ID" value="OsLiXu_02g0005290.01"/>
    <property type="gene ID" value="OsLiXu_02g0005290"/>
</dbReference>
<dbReference type="EnsemblPlants" id="OsPr106_02g0005100.01">
    <property type="protein sequence ID" value="OsPr106_02g0005100.01"/>
    <property type="gene ID" value="OsPr106_02g0005100"/>
</dbReference>
<dbReference type="EnsemblPlants" id="OsPr106_02g0005100.02">
    <property type="protein sequence ID" value="OsPr106_02g0005100.02"/>
    <property type="gene ID" value="OsPr106_02g0005100"/>
</dbReference>
<dbReference type="Gramene" id="OsIR64_02g0005060.01">
    <property type="protein sequence ID" value="OsIR64_02g0005060.01"/>
    <property type="gene ID" value="OsIR64_02g0005060"/>
</dbReference>
<dbReference type="Gramene" id="OsIR64_02g0005060.02">
    <property type="protein sequence ID" value="OsIR64_02g0005060.02"/>
    <property type="gene ID" value="OsIR64_02g0005060"/>
</dbReference>
<dbReference type="Gramene" id="OsKYG_02g0005050.01">
    <property type="protein sequence ID" value="OsKYG_02g0005050.01"/>
    <property type="gene ID" value="OsKYG_02g0005050"/>
</dbReference>
<dbReference type="Gramene" id="OsLima_02g0005460.01">
    <property type="protein sequence ID" value="OsLima_02g0005460.01"/>
    <property type="gene ID" value="OsLima_02g0005460"/>
</dbReference>
<dbReference type="Gramene" id="OsLiXu_02g0005290.01">
    <property type="protein sequence ID" value="OsLiXu_02g0005290.01"/>
    <property type="gene ID" value="OsLiXu_02g0005290"/>
</dbReference>
<dbReference type="Gramene" id="OsPr106_02g0005100.01">
    <property type="protein sequence ID" value="OsPr106_02g0005100.01"/>
    <property type="gene ID" value="OsPr106_02g0005100"/>
</dbReference>
<dbReference type="Gramene" id="OsPr106_02g0005100.02">
    <property type="protein sequence ID" value="OsPr106_02g0005100.02"/>
    <property type="gene ID" value="OsPr106_02g0005100"/>
</dbReference>
<dbReference type="GO" id="GO:0016151">
    <property type="term" value="F:nickel cation binding"/>
    <property type="evidence" value="ECO:0007669"/>
    <property type="project" value="InterPro"/>
</dbReference>
<dbReference type="GO" id="GO:0051604">
    <property type="term" value="P:protein maturation"/>
    <property type="evidence" value="ECO:0000314"/>
    <property type="project" value="UniProtKB"/>
</dbReference>
<dbReference type="FunFam" id="1.10.4190.10:FF:000001">
    <property type="entry name" value="Urease accessory protein F"/>
    <property type="match status" value="1"/>
</dbReference>
<dbReference type="Gene3D" id="1.10.4190.10">
    <property type="entry name" value="Urease accessory protein UreF"/>
    <property type="match status" value="1"/>
</dbReference>
<dbReference type="HAMAP" id="MF_01385">
    <property type="entry name" value="UreF"/>
    <property type="match status" value="1"/>
</dbReference>
<dbReference type="InterPro" id="IPR002639">
    <property type="entry name" value="UreF"/>
</dbReference>
<dbReference type="InterPro" id="IPR038277">
    <property type="entry name" value="UreF_sf"/>
</dbReference>
<dbReference type="PANTHER" id="PTHR33620">
    <property type="entry name" value="UREASE ACCESSORY PROTEIN F"/>
    <property type="match status" value="1"/>
</dbReference>
<dbReference type="PANTHER" id="PTHR33620:SF1">
    <property type="entry name" value="UREASE ACCESSORY PROTEIN F"/>
    <property type="match status" value="1"/>
</dbReference>
<dbReference type="Pfam" id="PF01730">
    <property type="entry name" value="UreF"/>
    <property type="match status" value="1"/>
</dbReference>
<dbReference type="PIRSF" id="PIRSF009467">
    <property type="entry name" value="Ureas_acces_UreF"/>
    <property type="match status" value="1"/>
</dbReference>
<reference key="1">
    <citation type="journal article" date="2010" name="Plant Physiol.">
        <title>Identification and characterization of proteins involved in rice urea and arginine catabolism.</title>
        <authorList>
            <person name="Cao F.Q."/>
            <person name="Werner A.K."/>
            <person name="Dahncke K."/>
            <person name="Romeis T."/>
            <person name="Liu L.H."/>
            <person name="Witte C.P."/>
        </authorList>
    </citation>
    <scope>NUCLEOTIDE SEQUENCE [MRNA]</scope>
    <scope>FUNCTION</scope>
    <source>
        <strain>cv. Hunan Late 2</strain>
    </source>
</reference>
<keyword id="KW-0143">Chaperone</keyword>
<keyword id="KW-0996">Nickel insertion</keyword>
<gene>
    <name type="primary">UREF</name>
</gene>
<sequence>MERVMECDYPASKKNKVVHPMDCEMKEEPTNAASMNQHSLWSQWQLLDSILPTGGFAHSYGLEAAMQSRMVNNPEELRSFVVQVLENTGSLLLPFVCCANKSPDAATWVKLDQLLEAMLTNEVSRKASMSQGSALLRVAASVFTEIQSLQDLRQTFLGSKIVSFHHAPIFGLICGLVGFDSETTQRAYMFVTMRDVISAATRLNLIGPLAASVLQHQVAEDAERMVQKWKDRGVEEATQTSPLLDALQGCHAYMFSRLFCT</sequence>